<proteinExistence type="inferred from homology"/>
<organism>
    <name type="scientific">Stutzerimonas stutzeri (strain A1501)</name>
    <name type="common">Pseudomonas stutzeri</name>
    <dbReference type="NCBI Taxonomy" id="379731"/>
    <lineage>
        <taxon>Bacteria</taxon>
        <taxon>Pseudomonadati</taxon>
        <taxon>Pseudomonadota</taxon>
        <taxon>Gammaproteobacteria</taxon>
        <taxon>Pseudomonadales</taxon>
        <taxon>Pseudomonadaceae</taxon>
        <taxon>Stutzerimonas</taxon>
    </lineage>
</organism>
<comment type="function">
    <text evidence="1">Multifunctional enzyme that catalyzes the SAM-dependent methylations of uroporphyrinogen III at position C-2 and C-7 to form precorrin-2 via precorrin-1. Then it catalyzes the NAD-dependent ring dehydrogenation of precorrin-2 to yield sirohydrochlorin. Finally, it catalyzes the ferrochelation of sirohydrochlorin to yield siroheme.</text>
</comment>
<comment type="catalytic activity">
    <reaction evidence="1">
        <text>uroporphyrinogen III + 2 S-adenosyl-L-methionine = precorrin-2 + 2 S-adenosyl-L-homocysteine + H(+)</text>
        <dbReference type="Rhea" id="RHEA:32459"/>
        <dbReference type="ChEBI" id="CHEBI:15378"/>
        <dbReference type="ChEBI" id="CHEBI:57308"/>
        <dbReference type="ChEBI" id="CHEBI:57856"/>
        <dbReference type="ChEBI" id="CHEBI:58827"/>
        <dbReference type="ChEBI" id="CHEBI:59789"/>
        <dbReference type="EC" id="2.1.1.107"/>
    </reaction>
</comment>
<comment type="catalytic activity">
    <reaction evidence="1">
        <text>precorrin-2 + NAD(+) = sirohydrochlorin + NADH + 2 H(+)</text>
        <dbReference type="Rhea" id="RHEA:15613"/>
        <dbReference type="ChEBI" id="CHEBI:15378"/>
        <dbReference type="ChEBI" id="CHEBI:57540"/>
        <dbReference type="ChEBI" id="CHEBI:57945"/>
        <dbReference type="ChEBI" id="CHEBI:58351"/>
        <dbReference type="ChEBI" id="CHEBI:58827"/>
        <dbReference type="EC" id="1.3.1.76"/>
    </reaction>
</comment>
<comment type="catalytic activity">
    <reaction evidence="1">
        <text>siroheme + 2 H(+) = sirohydrochlorin + Fe(2+)</text>
        <dbReference type="Rhea" id="RHEA:24360"/>
        <dbReference type="ChEBI" id="CHEBI:15378"/>
        <dbReference type="ChEBI" id="CHEBI:29033"/>
        <dbReference type="ChEBI" id="CHEBI:58351"/>
        <dbReference type="ChEBI" id="CHEBI:60052"/>
        <dbReference type="EC" id="4.99.1.4"/>
    </reaction>
</comment>
<comment type="pathway">
    <text evidence="1">Cofactor biosynthesis; adenosylcobalamin biosynthesis; precorrin-2 from uroporphyrinogen III: step 1/1.</text>
</comment>
<comment type="pathway">
    <text evidence="1">Cofactor biosynthesis; adenosylcobalamin biosynthesis; sirohydrochlorin from precorrin-2: step 1/1.</text>
</comment>
<comment type="pathway">
    <text evidence="1">Porphyrin-containing compound metabolism; siroheme biosynthesis; precorrin-2 from uroporphyrinogen III: step 1/1.</text>
</comment>
<comment type="pathway">
    <text evidence="1">Porphyrin-containing compound metabolism; siroheme biosynthesis; siroheme from sirohydrochlorin: step 1/1.</text>
</comment>
<comment type="pathway">
    <text evidence="1">Porphyrin-containing compound metabolism; siroheme biosynthesis; sirohydrochlorin from precorrin-2: step 1/1.</text>
</comment>
<comment type="similarity">
    <text evidence="1">In the N-terminal section; belongs to the precorrin-2 dehydrogenase / sirohydrochlorin ferrochelatase family.</text>
</comment>
<comment type="similarity">
    <text evidence="1">In the C-terminal section; belongs to the precorrin methyltransferase family.</text>
</comment>
<comment type="sequence caution" evidence="2">
    <conflict type="erroneous initiation">
        <sequence resource="EMBL-CDS" id="ABP79947"/>
    </conflict>
    <text>Extended N-terminus.</text>
</comment>
<accession>A4VLU6</accession>
<gene>
    <name evidence="1" type="primary">cysG</name>
    <name type="ordered locus">PST_2288</name>
</gene>
<reference key="1">
    <citation type="journal article" date="2008" name="Proc. Natl. Acad. Sci. U.S.A.">
        <title>Nitrogen fixation island and rhizosphere competence traits in the genome of root-associated Pseudomonas stutzeri A1501.</title>
        <authorList>
            <person name="Yan Y."/>
            <person name="Yang J."/>
            <person name="Dou Y."/>
            <person name="Chen M."/>
            <person name="Ping S."/>
            <person name="Peng J."/>
            <person name="Lu W."/>
            <person name="Zhang W."/>
            <person name="Yao Z."/>
            <person name="Li H."/>
            <person name="Liu W."/>
            <person name="He S."/>
            <person name="Geng L."/>
            <person name="Zhang X."/>
            <person name="Yang F."/>
            <person name="Yu H."/>
            <person name="Zhan Y."/>
            <person name="Li D."/>
            <person name="Lin Z."/>
            <person name="Wang Y."/>
            <person name="Elmerich C."/>
            <person name="Lin M."/>
            <person name="Jin Q."/>
        </authorList>
    </citation>
    <scope>NUCLEOTIDE SEQUENCE [LARGE SCALE GENOMIC DNA]</scope>
    <source>
        <strain>A1501</strain>
    </source>
</reference>
<feature type="chain" id="PRO_0000330542" description="Siroheme synthase">
    <location>
        <begin position="1"/>
        <end position="465"/>
    </location>
</feature>
<feature type="region of interest" description="Precorrin-2 dehydrogenase /sirohydrochlorin ferrochelatase" evidence="1">
    <location>
        <begin position="1"/>
        <end position="203"/>
    </location>
</feature>
<feature type="region of interest" description="Uroporphyrinogen-III C-methyltransferase" evidence="1">
    <location>
        <begin position="216"/>
        <end position="465"/>
    </location>
</feature>
<feature type="active site" description="Proton acceptor" evidence="1">
    <location>
        <position position="248"/>
    </location>
</feature>
<feature type="active site" description="Proton donor" evidence="1">
    <location>
        <position position="270"/>
    </location>
</feature>
<feature type="binding site" evidence="1">
    <location>
        <begin position="22"/>
        <end position="23"/>
    </location>
    <ligand>
        <name>NAD(+)</name>
        <dbReference type="ChEBI" id="CHEBI:57540"/>
    </ligand>
</feature>
<feature type="binding site" evidence="1">
    <location>
        <begin position="43"/>
        <end position="44"/>
    </location>
    <ligand>
        <name>NAD(+)</name>
        <dbReference type="ChEBI" id="CHEBI:57540"/>
    </ligand>
</feature>
<feature type="binding site" evidence="1">
    <location>
        <position position="225"/>
    </location>
    <ligand>
        <name>S-adenosyl-L-methionine</name>
        <dbReference type="ChEBI" id="CHEBI:59789"/>
    </ligand>
</feature>
<feature type="binding site" evidence="1">
    <location>
        <begin position="301"/>
        <end position="303"/>
    </location>
    <ligand>
        <name>S-adenosyl-L-methionine</name>
        <dbReference type="ChEBI" id="CHEBI:59789"/>
    </ligand>
</feature>
<feature type="binding site" evidence="1">
    <location>
        <position position="306"/>
    </location>
    <ligand>
        <name>S-adenosyl-L-methionine</name>
        <dbReference type="ChEBI" id="CHEBI:59789"/>
    </ligand>
</feature>
<feature type="binding site" evidence="1">
    <location>
        <begin position="331"/>
        <end position="332"/>
    </location>
    <ligand>
        <name>S-adenosyl-L-methionine</name>
        <dbReference type="ChEBI" id="CHEBI:59789"/>
    </ligand>
</feature>
<feature type="binding site" evidence="1">
    <location>
        <position position="383"/>
    </location>
    <ligand>
        <name>S-adenosyl-L-methionine</name>
        <dbReference type="ChEBI" id="CHEBI:59789"/>
    </ligand>
</feature>
<feature type="binding site" evidence="1">
    <location>
        <position position="412"/>
    </location>
    <ligand>
        <name>S-adenosyl-L-methionine</name>
        <dbReference type="ChEBI" id="CHEBI:59789"/>
    </ligand>
</feature>
<feature type="modified residue" description="Phosphoserine" evidence="1">
    <location>
        <position position="128"/>
    </location>
</feature>
<name>CYSG_STUS1</name>
<keyword id="KW-0169">Cobalamin biosynthesis</keyword>
<keyword id="KW-0456">Lyase</keyword>
<keyword id="KW-0489">Methyltransferase</keyword>
<keyword id="KW-0511">Multifunctional enzyme</keyword>
<keyword id="KW-0520">NAD</keyword>
<keyword id="KW-0560">Oxidoreductase</keyword>
<keyword id="KW-0597">Phosphoprotein</keyword>
<keyword id="KW-0627">Porphyrin biosynthesis</keyword>
<keyword id="KW-1185">Reference proteome</keyword>
<keyword id="KW-0949">S-adenosyl-L-methionine</keyword>
<keyword id="KW-0808">Transferase</keyword>
<protein>
    <recommendedName>
        <fullName evidence="1">Siroheme synthase</fullName>
    </recommendedName>
    <domain>
        <recommendedName>
            <fullName evidence="1">Uroporphyrinogen-III C-methyltransferase</fullName>
            <shortName evidence="1">Urogen III methylase</shortName>
            <ecNumber evidence="1">2.1.1.107</ecNumber>
        </recommendedName>
        <alternativeName>
            <fullName evidence="1">SUMT</fullName>
        </alternativeName>
        <alternativeName>
            <fullName evidence="1">Uroporphyrinogen III methylase</fullName>
            <shortName evidence="1">UROM</shortName>
        </alternativeName>
    </domain>
    <domain>
        <recommendedName>
            <fullName evidence="1">Precorrin-2 dehydrogenase</fullName>
            <ecNumber evidence="1">1.3.1.76</ecNumber>
        </recommendedName>
    </domain>
    <domain>
        <recommendedName>
            <fullName evidence="1">Sirohydrochlorin ferrochelatase</fullName>
            <ecNumber evidence="1">4.99.1.4</ecNumber>
        </recommendedName>
    </domain>
</protein>
<sequence>MEYLPLFHNLKGRTVLIVGGGEIALRKARLLSEAGARLRVVAPSIEAQLVELVQAGAGECLDRGYARQDLQGCVLAIAATDDEPLNATVSQHANALGVPVNVVDSPQLCSVIFPAIVDRSPLVVAVSSGGDAPVLARLIRARIETWIPAAYGQLAGLAKQFRAQVKARFANVQQRRVFWEEVFQGPIAEQALAGRTAEAERLLAEKLAGVAPKALGEVYLVGAGPGDPDLLTFRALRLMQQADVVLYDRLVAPAIIDLCRRDADRIYVGKQRADHAVPQEQINQQLVTLAKQGKRVLRLKGGDPFIFGRGGEEIEELAAHGVPFQVVPGITAASGCAAYAGIPLTHRDHAQSVRFVTGHLKDGSCDLPWSELAAPAQTLVFYMGLVGLPVICQQLIAHGRSAETPAALVQQGTTSNQRVFTATLGTLAGRIAQEDVQAPTLLIVGEVVQLREKLAWFEGAQAAGR</sequence>
<evidence type="ECO:0000255" key="1">
    <source>
        <dbReference type="HAMAP-Rule" id="MF_01646"/>
    </source>
</evidence>
<evidence type="ECO:0000305" key="2"/>
<dbReference type="EC" id="2.1.1.107" evidence="1"/>
<dbReference type="EC" id="1.3.1.76" evidence="1"/>
<dbReference type="EC" id="4.99.1.4" evidence="1"/>
<dbReference type="EMBL" id="CP000304">
    <property type="protein sequence ID" value="ABP79947.1"/>
    <property type="status" value="ALT_INIT"/>
    <property type="molecule type" value="Genomic_DNA"/>
</dbReference>
<dbReference type="RefSeq" id="WP_041755512.1">
    <property type="nucleotide sequence ID" value="NC_009434.1"/>
</dbReference>
<dbReference type="SMR" id="A4VLU6"/>
<dbReference type="KEGG" id="psa:PST_2288"/>
<dbReference type="eggNOG" id="COG0007">
    <property type="taxonomic scope" value="Bacteria"/>
</dbReference>
<dbReference type="eggNOG" id="COG1648">
    <property type="taxonomic scope" value="Bacteria"/>
</dbReference>
<dbReference type="HOGENOM" id="CLU_011276_2_2_6"/>
<dbReference type="UniPathway" id="UPA00148">
    <property type="reaction ID" value="UER00211"/>
</dbReference>
<dbReference type="UniPathway" id="UPA00148">
    <property type="reaction ID" value="UER00222"/>
</dbReference>
<dbReference type="UniPathway" id="UPA00262">
    <property type="reaction ID" value="UER00211"/>
</dbReference>
<dbReference type="UniPathway" id="UPA00262">
    <property type="reaction ID" value="UER00222"/>
</dbReference>
<dbReference type="UniPathway" id="UPA00262">
    <property type="reaction ID" value="UER00376"/>
</dbReference>
<dbReference type="Proteomes" id="UP000000233">
    <property type="component" value="Chromosome"/>
</dbReference>
<dbReference type="GO" id="GO:0051287">
    <property type="term" value="F:NAD binding"/>
    <property type="evidence" value="ECO:0007669"/>
    <property type="project" value="InterPro"/>
</dbReference>
<dbReference type="GO" id="GO:0043115">
    <property type="term" value="F:precorrin-2 dehydrogenase activity"/>
    <property type="evidence" value="ECO:0007669"/>
    <property type="project" value="UniProtKB-UniRule"/>
</dbReference>
<dbReference type="GO" id="GO:0051266">
    <property type="term" value="F:sirohydrochlorin ferrochelatase activity"/>
    <property type="evidence" value="ECO:0007669"/>
    <property type="project" value="UniProtKB-EC"/>
</dbReference>
<dbReference type="GO" id="GO:0004851">
    <property type="term" value="F:uroporphyrin-III C-methyltransferase activity"/>
    <property type="evidence" value="ECO:0007669"/>
    <property type="project" value="UniProtKB-UniRule"/>
</dbReference>
<dbReference type="GO" id="GO:0009236">
    <property type="term" value="P:cobalamin biosynthetic process"/>
    <property type="evidence" value="ECO:0007669"/>
    <property type="project" value="UniProtKB-UniRule"/>
</dbReference>
<dbReference type="GO" id="GO:0032259">
    <property type="term" value="P:methylation"/>
    <property type="evidence" value="ECO:0007669"/>
    <property type="project" value="UniProtKB-KW"/>
</dbReference>
<dbReference type="GO" id="GO:0019354">
    <property type="term" value="P:siroheme biosynthetic process"/>
    <property type="evidence" value="ECO:0007669"/>
    <property type="project" value="UniProtKB-UniRule"/>
</dbReference>
<dbReference type="CDD" id="cd11642">
    <property type="entry name" value="SUMT"/>
    <property type="match status" value="1"/>
</dbReference>
<dbReference type="FunFam" id="3.30.160.110:FF:000001">
    <property type="entry name" value="Siroheme synthase"/>
    <property type="match status" value="1"/>
</dbReference>
<dbReference type="FunFam" id="3.30.950.10:FF:000001">
    <property type="entry name" value="Siroheme synthase"/>
    <property type="match status" value="1"/>
</dbReference>
<dbReference type="FunFam" id="3.40.1010.10:FF:000001">
    <property type="entry name" value="Siroheme synthase"/>
    <property type="match status" value="1"/>
</dbReference>
<dbReference type="Gene3D" id="3.40.1010.10">
    <property type="entry name" value="Cobalt-precorrin-4 Transmethylase, Domain 1"/>
    <property type="match status" value="1"/>
</dbReference>
<dbReference type="Gene3D" id="3.30.950.10">
    <property type="entry name" value="Methyltransferase, Cobalt-precorrin-4 Transmethylase, Domain 2"/>
    <property type="match status" value="1"/>
</dbReference>
<dbReference type="Gene3D" id="3.40.50.720">
    <property type="entry name" value="NAD(P)-binding Rossmann-like Domain"/>
    <property type="match status" value="1"/>
</dbReference>
<dbReference type="Gene3D" id="1.10.8.210">
    <property type="entry name" value="Sirohaem synthase, dimerisation domain"/>
    <property type="match status" value="1"/>
</dbReference>
<dbReference type="Gene3D" id="3.30.160.110">
    <property type="entry name" value="Siroheme synthase, domain 2"/>
    <property type="match status" value="1"/>
</dbReference>
<dbReference type="HAMAP" id="MF_01646">
    <property type="entry name" value="Siroheme_synth"/>
    <property type="match status" value="1"/>
</dbReference>
<dbReference type="InterPro" id="IPR000878">
    <property type="entry name" value="4pyrrol_Mease"/>
</dbReference>
<dbReference type="InterPro" id="IPR035996">
    <property type="entry name" value="4pyrrol_Methylase_sf"/>
</dbReference>
<dbReference type="InterPro" id="IPR014777">
    <property type="entry name" value="4pyrrole_Mease_sub1"/>
</dbReference>
<dbReference type="InterPro" id="IPR014776">
    <property type="entry name" value="4pyrrole_Mease_sub2"/>
</dbReference>
<dbReference type="InterPro" id="IPR006366">
    <property type="entry name" value="CobA/CysG_C"/>
</dbReference>
<dbReference type="InterPro" id="IPR036291">
    <property type="entry name" value="NAD(P)-bd_dom_sf"/>
</dbReference>
<dbReference type="InterPro" id="IPR050161">
    <property type="entry name" value="Siro_Cobalamin_biosynth"/>
</dbReference>
<dbReference type="InterPro" id="IPR037115">
    <property type="entry name" value="Sirohaem_synt_dimer_dom_sf"/>
</dbReference>
<dbReference type="InterPro" id="IPR012409">
    <property type="entry name" value="Sirohaem_synth"/>
</dbReference>
<dbReference type="InterPro" id="IPR028281">
    <property type="entry name" value="Sirohaem_synthase_central"/>
</dbReference>
<dbReference type="InterPro" id="IPR019478">
    <property type="entry name" value="Sirohaem_synthase_dimer_dom"/>
</dbReference>
<dbReference type="InterPro" id="IPR006367">
    <property type="entry name" value="Sirohaem_synthase_N"/>
</dbReference>
<dbReference type="InterPro" id="IPR003043">
    <property type="entry name" value="Uropor_MeTrfase_CS"/>
</dbReference>
<dbReference type="NCBIfam" id="TIGR01469">
    <property type="entry name" value="cobA_cysG_Cterm"/>
    <property type="match status" value="1"/>
</dbReference>
<dbReference type="NCBIfam" id="TIGR01470">
    <property type="entry name" value="cysG_Nterm"/>
    <property type="match status" value="1"/>
</dbReference>
<dbReference type="NCBIfam" id="NF004790">
    <property type="entry name" value="PRK06136.1"/>
    <property type="match status" value="1"/>
</dbReference>
<dbReference type="NCBIfam" id="NF007922">
    <property type="entry name" value="PRK10637.1"/>
    <property type="match status" value="1"/>
</dbReference>
<dbReference type="PANTHER" id="PTHR45790:SF1">
    <property type="entry name" value="SIROHEME SYNTHASE"/>
    <property type="match status" value="1"/>
</dbReference>
<dbReference type="PANTHER" id="PTHR45790">
    <property type="entry name" value="SIROHEME SYNTHASE-RELATED"/>
    <property type="match status" value="1"/>
</dbReference>
<dbReference type="Pfam" id="PF10414">
    <property type="entry name" value="CysG_dimeriser"/>
    <property type="match status" value="1"/>
</dbReference>
<dbReference type="Pfam" id="PF13241">
    <property type="entry name" value="NAD_binding_7"/>
    <property type="match status" value="1"/>
</dbReference>
<dbReference type="Pfam" id="PF14824">
    <property type="entry name" value="Sirohm_synth_M"/>
    <property type="match status" value="1"/>
</dbReference>
<dbReference type="Pfam" id="PF00590">
    <property type="entry name" value="TP_methylase"/>
    <property type="match status" value="1"/>
</dbReference>
<dbReference type="PIRSF" id="PIRSF036426">
    <property type="entry name" value="Sirohaem_synth"/>
    <property type="match status" value="1"/>
</dbReference>
<dbReference type="SUPFAM" id="SSF51735">
    <property type="entry name" value="NAD(P)-binding Rossmann-fold domains"/>
    <property type="match status" value="1"/>
</dbReference>
<dbReference type="SUPFAM" id="SSF75615">
    <property type="entry name" value="Siroheme synthase middle domains-like"/>
    <property type="match status" value="1"/>
</dbReference>
<dbReference type="SUPFAM" id="SSF53790">
    <property type="entry name" value="Tetrapyrrole methylase"/>
    <property type="match status" value="1"/>
</dbReference>
<dbReference type="PROSITE" id="PS00840">
    <property type="entry name" value="SUMT_2"/>
    <property type="match status" value="1"/>
</dbReference>